<dbReference type="EMBL" id="CP000848">
    <property type="protein sequence ID" value="ABV76732.1"/>
    <property type="molecule type" value="Genomic_DNA"/>
</dbReference>
<dbReference type="RefSeq" id="WP_012151280.1">
    <property type="nucleotide sequence ID" value="NZ_CP121767.1"/>
</dbReference>
<dbReference type="SMR" id="A8GTK7"/>
<dbReference type="GeneID" id="79937785"/>
<dbReference type="KEGG" id="rri:A1G_06395"/>
<dbReference type="HOGENOM" id="CLU_095424_4_1_5"/>
<dbReference type="Proteomes" id="UP000006832">
    <property type="component" value="Chromosome"/>
</dbReference>
<dbReference type="GO" id="GO:1990904">
    <property type="term" value="C:ribonucleoprotein complex"/>
    <property type="evidence" value="ECO:0007669"/>
    <property type="project" value="UniProtKB-KW"/>
</dbReference>
<dbReference type="GO" id="GO:0005840">
    <property type="term" value="C:ribosome"/>
    <property type="evidence" value="ECO:0007669"/>
    <property type="project" value="UniProtKB-KW"/>
</dbReference>
<dbReference type="GO" id="GO:0003735">
    <property type="term" value="F:structural constituent of ribosome"/>
    <property type="evidence" value="ECO:0007669"/>
    <property type="project" value="InterPro"/>
</dbReference>
<dbReference type="GO" id="GO:0006412">
    <property type="term" value="P:translation"/>
    <property type="evidence" value="ECO:0007669"/>
    <property type="project" value="UniProtKB-UniRule"/>
</dbReference>
<dbReference type="FunFam" id="2.40.50.100:FF:000020">
    <property type="entry name" value="50S ribosomal protein L27"/>
    <property type="match status" value="1"/>
</dbReference>
<dbReference type="Gene3D" id="2.40.50.100">
    <property type="match status" value="1"/>
</dbReference>
<dbReference type="HAMAP" id="MF_00539">
    <property type="entry name" value="Ribosomal_bL27"/>
    <property type="match status" value="1"/>
</dbReference>
<dbReference type="InterPro" id="IPR001684">
    <property type="entry name" value="Ribosomal_bL27"/>
</dbReference>
<dbReference type="InterPro" id="IPR018261">
    <property type="entry name" value="Ribosomal_bL27_CS"/>
</dbReference>
<dbReference type="NCBIfam" id="TIGR00062">
    <property type="entry name" value="L27"/>
    <property type="match status" value="1"/>
</dbReference>
<dbReference type="PANTHER" id="PTHR15893:SF0">
    <property type="entry name" value="LARGE RIBOSOMAL SUBUNIT PROTEIN BL27M"/>
    <property type="match status" value="1"/>
</dbReference>
<dbReference type="PANTHER" id="PTHR15893">
    <property type="entry name" value="RIBOSOMAL PROTEIN L27"/>
    <property type="match status" value="1"/>
</dbReference>
<dbReference type="Pfam" id="PF01016">
    <property type="entry name" value="Ribosomal_L27"/>
    <property type="match status" value="1"/>
</dbReference>
<dbReference type="PRINTS" id="PR00063">
    <property type="entry name" value="RIBOSOMALL27"/>
</dbReference>
<dbReference type="SUPFAM" id="SSF110324">
    <property type="entry name" value="Ribosomal L27 protein-like"/>
    <property type="match status" value="1"/>
</dbReference>
<dbReference type="PROSITE" id="PS00831">
    <property type="entry name" value="RIBOSOMAL_L27"/>
    <property type="match status" value="1"/>
</dbReference>
<keyword id="KW-0687">Ribonucleoprotein</keyword>
<keyword id="KW-0689">Ribosomal protein</keyword>
<feature type="chain" id="PRO_1000017587" description="Large ribosomal subunit protein bL27">
    <location>
        <begin position="1"/>
        <end position="86"/>
    </location>
</feature>
<feature type="region of interest" description="Disordered" evidence="2">
    <location>
        <begin position="1"/>
        <end position="22"/>
    </location>
</feature>
<gene>
    <name evidence="1" type="primary">rpmA</name>
    <name type="ordered locus">A1G_06395</name>
</gene>
<accession>A8GTK7</accession>
<evidence type="ECO:0000255" key="1">
    <source>
        <dbReference type="HAMAP-Rule" id="MF_00539"/>
    </source>
</evidence>
<evidence type="ECO:0000256" key="2">
    <source>
        <dbReference type="SAM" id="MobiDB-lite"/>
    </source>
</evidence>
<evidence type="ECO:0000305" key="3"/>
<reference key="1">
    <citation type="submission" date="2007-09" db="EMBL/GenBank/DDBJ databases">
        <title>Complete genome sequence of Rickettsia rickettsii.</title>
        <authorList>
            <person name="Madan A."/>
            <person name="Fahey J."/>
            <person name="Helton E."/>
            <person name="Ketteman M."/>
            <person name="Madan A."/>
            <person name="Rodrigues S."/>
            <person name="Sanchez A."/>
            <person name="Dasch G."/>
            <person name="Eremeeva M."/>
        </authorList>
    </citation>
    <scope>NUCLEOTIDE SEQUENCE [LARGE SCALE GENOMIC DNA]</scope>
    <source>
        <strain>Sheila Smith</strain>
    </source>
</reference>
<comment type="similarity">
    <text evidence="1">Belongs to the bacterial ribosomal protein bL27 family.</text>
</comment>
<protein>
    <recommendedName>
        <fullName evidence="1">Large ribosomal subunit protein bL27</fullName>
    </recommendedName>
    <alternativeName>
        <fullName evidence="3">50S ribosomal protein L27</fullName>
    </alternativeName>
</protein>
<proteinExistence type="inferred from homology"/>
<sequence length="86" mass="9323">MATKKAGGSSRNGRDSAGRRLGVKKADGQYVIPGNIIVRQRGTKIHPGMNVGLGKDHTIFALIEGRVEFLTKRNHKIVNVKEIAST</sequence>
<organism>
    <name type="scientific">Rickettsia rickettsii (strain Sheila Smith)</name>
    <dbReference type="NCBI Taxonomy" id="392021"/>
    <lineage>
        <taxon>Bacteria</taxon>
        <taxon>Pseudomonadati</taxon>
        <taxon>Pseudomonadota</taxon>
        <taxon>Alphaproteobacteria</taxon>
        <taxon>Rickettsiales</taxon>
        <taxon>Rickettsiaceae</taxon>
        <taxon>Rickettsieae</taxon>
        <taxon>Rickettsia</taxon>
        <taxon>spotted fever group</taxon>
    </lineage>
</organism>
<name>RL27_RICRS</name>